<comment type="function">
    <text evidence="1">Responsible for synthesis of pseudouridine from uracil-55 in the psi GC loop of transfer RNAs.</text>
</comment>
<comment type="catalytic activity">
    <reaction evidence="1">
        <text>uridine(55) in tRNA = pseudouridine(55) in tRNA</text>
        <dbReference type="Rhea" id="RHEA:42532"/>
        <dbReference type="Rhea" id="RHEA-COMP:10101"/>
        <dbReference type="Rhea" id="RHEA-COMP:10102"/>
        <dbReference type="ChEBI" id="CHEBI:65314"/>
        <dbReference type="ChEBI" id="CHEBI:65315"/>
        <dbReference type="EC" id="5.4.99.25"/>
    </reaction>
</comment>
<comment type="similarity">
    <text evidence="1">Belongs to the pseudouridine synthase TruB family. Type 1 subfamily.</text>
</comment>
<evidence type="ECO:0000255" key="1">
    <source>
        <dbReference type="HAMAP-Rule" id="MF_01080"/>
    </source>
</evidence>
<organism>
    <name type="scientific">Serratia proteamaculans (strain 568)</name>
    <dbReference type="NCBI Taxonomy" id="399741"/>
    <lineage>
        <taxon>Bacteria</taxon>
        <taxon>Pseudomonadati</taxon>
        <taxon>Pseudomonadota</taxon>
        <taxon>Gammaproteobacteria</taxon>
        <taxon>Enterobacterales</taxon>
        <taxon>Yersiniaceae</taxon>
        <taxon>Serratia</taxon>
    </lineage>
</organism>
<sequence>MSRPRRRGRDIHGVLLLDKPQGLSSNDALQKVKRLYNANRAGHTGALDPLATGMLPICLGEATKFSQFLLDSDKRYRVIARLGQRTDTSDADGQIVQERPVSFTQAQLDAALDSFRGDIKQVPSMYSALKYQGKKLYEYARQGIEVPREARSITVYELQFIRWEGDELELEIHCSKGTYIRTITDDLGELLGCGAHVIYLRRLQVATYPTERMVTLEQLNELLEQAHRQEIAPAELLDPLLMPMDSPVENYPEVNLLPVVAGYVKQGQPVQVAGAPASGMVRITEGEERKFIGVGDIADDGRVAPRRLVVEYFD</sequence>
<protein>
    <recommendedName>
        <fullName evidence="1">tRNA pseudouridine synthase B</fullName>
        <ecNumber evidence="1">5.4.99.25</ecNumber>
    </recommendedName>
    <alternativeName>
        <fullName evidence="1">tRNA pseudouridine(55) synthase</fullName>
        <shortName evidence="1">Psi55 synthase</shortName>
    </alternativeName>
    <alternativeName>
        <fullName evidence="1">tRNA pseudouridylate synthase</fullName>
    </alternativeName>
    <alternativeName>
        <fullName evidence="1">tRNA-uridine isomerase</fullName>
    </alternativeName>
</protein>
<name>TRUB_SERP5</name>
<accession>A8G909</accession>
<feature type="chain" id="PRO_1000084668" description="tRNA pseudouridine synthase B">
    <location>
        <begin position="1"/>
        <end position="314"/>
    </location>
</feature>
<feature type="active site" description="Nucleophile" evidence="1">
    <location>
        <position position="48"/>
    </location>
</feature>
<feature type="binding site" evidence="1">
    <location>
        <position position="43"/>
    </location>
    <ligand>
        <name>substrate</name>
    </ligand>
</feature>
<feature type="binding site" evidence="1">
    <location>
        <position position="76"/>
    </location>
    <ligand>
        <name>substrate</name>
    </ligand>
</feature>
<feature type="binding site" evidence="1">
    <location>
        <position position="179"/>
    </location>
    <ligand>
        <name>substrate</name>
    </ligand>
</feature>
<feature type="binding site" evidence="1">
    <location>
        <position position="200"/>
    </location>
    <ligand>
        <name>substrate</name>
    </ligand>
</feature>
<gene>
    <name evidence="1" type="primary">truB</name>
    <name type="ordered locus">Spro_0491</name>
</gene>
<proteinExistence type="inferred from homology"/>
<dbReference type="EC" id="5.4.99.25" evidence="1"/>
<dbReference type="EMBL" id="CP000826">
    <property type="protein sequence ID" value="ABV39599.1"/>
    <property type="molecule type" value="Genomic_DNA"/>
</dbReference>
<dbReference type="SMR" id="A8G909"/>
<dbReference type="STRING" id="399741.Spro_0491"/>
<dbReference type="KEGG" id="spe:Spro_0491"/>
<dbReference type="eggNOG" id="COG0130">
    <property type="taxonomic scope" value="Bacteria"/>
</dbReference>
<dbReference type="HOGENOM" id="CLU_032087_0_3_6"/>
<dbReference type="OrthoDB" id="9802309at2"/>
<dbReference type="GO" id="GO:0003723">
    <property type="term" value="F:RNA binding"/>
    <property type="evidence" value="ECO:0007669"/>
    <property type="project" value="InterPro"/>
</dbReference>
<dbReference type="GO" id="GO:0160148">
    <property type="term" value="F:tRNA pseudouridine(55) synthase activity"/>
    <property type="evidence" value="ECO:0007669"/>
    <property type="project" value="UniProtKB-EC"/>
</dbReference>
<dbReference type="GO" id="GO:1990481">
    <property type="term" value="P:mRNA pseudouridine synthesis"/>
    <property type="evidence" value="ECO:0007669"/>
    <property type="project" value="TreeGrafter"/>
</dbReference>
<dbReference type="GO" id="GO:0031119">
    <property type="term" value="P:tRNA pseudouridine synthesis"/>
    <property type="evidence" value="ECO:0007669"/>
    <property type="project" value="UniProtKB-UniRule"/>
</dbReference>
<dbReference type="CDD" id="cd02573">
    <property type="entry name" value="PseudoU_synth_EcTruB"/>
    <property type="match status" value="1"/>
</dbReference>
<dbReference type="CDD" id="cd21152">
    <property type="entry name" value="PUA_TruB_bacterial"/>
    <property type="match status" value="1"/>
</dbReference>
<dbReference type="FunFam" id="2.30.130.10:FF:000004">
    <property type="entry name" value="tRNA pseudouridine synthase B"/>
    <property type="match status" value="1"/>
</dbReference>
<dbReference type="FunFam" id="3.30.2350.10:FF:000003">
    <property type="entry name" value="tRNA pseudouridine synthase B"/>
    <property type="match status" value="1"/>
</dbReference>
<dbReference type="Gene3D" id="3.30.2350.10">
    <property type="entry name" value="Pseudouridine synthase"/>
    <property type="match status" value="1"/>
</dbReference>
<dbReference type="Gene3D" id="2.30.130.10">
    <property type="entry name" value="PUA domain"/>
    <property type="match status" value="1"/>
</dbReference>
<dbReference type="HAMAP" id="MF_01080">
    <property type="entry name" value="TruB_bact"/>
    <property type="match status" value="1"/>
</dbReference>
<dbReference type="InterPro" id="IPR020103">
    <property type="entry name" value="PsdUridine_synth_cat_dom_sf"/>
</dbReference>
<dbReference type="InterPro" id="IPR002501">
    <property type="entry name" value="PsdUridine_synth_N"/>
</dbReference>
<dbReference type="InterPro" id="IPR015947">
    <property type="entry name" value="PUA-like_sf"/>
</dbReference>
<dbReference type="InterPro" id="IPR036974">
    <property type="entry name" value="PUA_sf"/>
</dbReference>
<dbReference type="InterPro" id="IPR014780">
    <property type="entry name" value="tRNA_psdUridine_synth_TruB"/>
</dbReference>
<dbReference type="InterPro" id="IPR015240">
    <property type="entry name" value="tRNA_sdUridine_synth_fam1_C"/>
</dbReference>
<dbReference type="InterPro" id="IPR032819">
    <property type="entry name" value="TruB_C"/>
</dbReference>
<dbReference type="NCBIfam" id="TIGR00431">
    <property type="entry name" value="TruB"/>
    <property type="match status" value="1"/>
</dbReference>
<dbReference type="PANTHER" id="PTHR13767:SF2">
    <property type="entry name" value="PSEUDOURIDYLATE SYNTHASE TRUB1"/>
    <property type="match status" value="1"/>
</dbReference>
<dbReference type="PANTHER" id="PTHR13767">
    <property type="entry name" value="TRNA-PSEUDOURIDINE SYNTHASE"/>
    <property type="match status" value="1"/>
</dbReference>
<dbReference type="Pfam" id="PF09157">
    <property type="entry name" value="TruB-C_2"/>
    <property type="match status" value="1"/>
</dbReference>
<dbReference type="Pfam" id="PF16198">
    <property type="entry name" value="TruB_C_2"/>
    <property type="match status" value="1"/>
</dbReference>
<dbReference type="Pfam" id="PF01509">
    <property type="entry name" value="TruB_N"/>
    <property type="match status" value="1"/>
</dbReference>
<dbReference type="SUPFAM" id="SSF55120">
    <property type="entry name" value="Pseudouridine synthase"/>
    <property type="match status" value="1"/>
</dbReference>
<dbReference type="SUPFAM" id="SSF88697">
    <property type="entry name" value="PUA domain-like"/>
    <property type="match status" value="1"/>
</dbReference>
<reference key="1">
    <citation type="submission" date="2007-09" db="EMBL/GenBank/DDBJ databases">
        <title>Complete sequence of chromosome of Serratia proteamaculans 568.</title>
        <authorList>
            <consortium name="US DOE Joint Genome Institute"/>
            <person name="Copeland A."/>
            <person name="Lucas S."/>
            <person name="Lapidus A."/>
            <person name="Barry K."/>
            <person name="Glavina del Rio T."/>
            <person name="Dalin E."/>
            <person name="Tice H."/>
            <person name="Pitluck S."/>
            <person name="Chain P."/>
            <person name="Malfatti S."/>
            <person name="Shin M."/>
            <person name="Vergez L."/>
            <person name="Schmutz J."/>
            <person name="Larimer F."/>
            <person name="Land M."/>
            <person name="Hauser L."/>
            <person name="Kyrpides N."/>
            <person name="Kim E."/>
            <person name="Taghavi S."/>
            <person name="Newman L."/>
            <person name="Vangronsveld J."/>
            <person name="van der Lelie D."/>
            <person name="Richardson P."/>
        </authorList>
    </citation>
    <scope>NUCLEOTIDE SEQUENCE [LARGE SCALE GENOMIC DNA]</scope>
    <source>
        <strain>568</strain>
    </source>
</reference>
<keyword id="KW-0413">Isomerase</keyword>
<keyword id="KW-0819">tRNA processing</keyword>